<reference key="1">
    <citation type="journal article" date="2005" name="Nature">
        <title>The genome of the social amoeba Dictyostelium discoideum.</title>
        <authorList>
            <person name="Eichinger L."/>
            <person name="Pachebat J.A."/>
            <person name="Gloeckner G."/>
            <person name="Rajandream M.A."/>
            <person name="Sucgang R."/>
            <person name="Berriman M."/>
            <person name="Song J."/>
            <person name="Olsen R."/>
            <person name="Szafranski K."/>
            <person name="Xu Q."/>
            <person name="Tunggal B."/>
            <person name="Kummerfeld S."/>
            <person name="Madera M."/>
            <person name="Konfortov B.A."/>
            <person name="Rivero F."/>
            <person name="Bankier A.T."/>
            <person name="Lehmann R."/>
            <person name="Hamlin N."/>
            <person name="Davies R."/>
            <person name="Gaudet P."/>
            <person name="Fey P."/>
            <person name="Pilcher K."/>
            <person name="Chen G."/>
            <person name="Saunders D."/>
            <person name="Sodergren E.J."/>
            <person name="Davis P."/>
            <person name="Kerhornou A."/>
            <person name="Nie X."/>
            <person name="Hall N."/>
            <person name="Anjard C."/>
            <person name="Hemphill L."/>
            <person name="Bason N."/>
            <person name="Farbrother P."/>
            <person name="Desany B."/>
            <person name="Just E."/>
            <person name="Morio T."/>
            <person name="Rost R."/>
            <person name="Churcher C.M."/>
            <person name="Cooper J."/>
            <person name="Haydock S."/>
            <person name="van Driessche N."/>
            <person name="Cronin A."/>
            <person name="Goodhead I."/>
            <person name="Muzny D.M."/>
            <person name="Mourier T."/>
            <person name="Pain A."/>
            <person name="Lu M."/>
            <person name="Harper D."/>
            <person name="Lindsay R."/>
            <person name="Hauser H."/>
            <person name="James K.D."/>
            <person name="Quiles M."/>
            <person name="Madan Babu M."/>
            <person name="Saito T."/>
            <person name="Buchrieser C."/>
            <person name="Wardroper A."/>
            <person name="Felder M."/>
            <person name="Thangavelu M."/>
            <person name="Johnson D."/>
            <person name="Knights A."/>
            <person name="Loulseged H."/>
            <person name="Mungall K.L."/>
            <person name="Oliver K."/>
            <person name="Price C."/>
            <person name="Quail M.A."/>
            <person name="Urushihara H."/>
            <person name="Hernandez J."/>
            <person name="Rabbinowitsch E."/>
            <person name="Steffen D."/>
            <person name="Sanders M."/>
            <person name="Ma J."/>
            <person name="Kohara Y."/>
            <person name="Sharp S."/>
            <person name="Simmonds M.N."/>
            <person name="Spiegler S."/>
            <person name="Tivey A."/>
            <person name="Sugano S."/>
            <person name="White B."/>
            <person name="Walker D."/>
            <person name="Woodward J.R."/>
            <person name="Winckler T."/>
            <person name="Tanaka Y."/>
            <person name="Shaulsky G."/>
            <person name="Schleicher M."/>
            <person name="Weinstock G.M."/>
            <person name="Rosenthal A."/>
            <person name="Cox E.C."/>
            <person name="Chisholm R.L."/>
            <person name="Gibbs R.A."/>
            <person name="Loomis W.F."/>
            <person name="Platzer M."/>
            <person name="Kay R.R."/>
            <person name="Williams J.G."/>
            <person name="Dear P.H."/>
            <person name="Noegel A.A."/>
            <person name="Barrell B.G."/>
            <person name="Kuspa A."/>
        </authorList>
    </citation>
    <scope>NUCLEOTIDE SEQUENCE [LARGE SCALE GENOMIC DNA]</scope>
    <source>
        <strain>AX4</strain>
    </source>
</reference>
<organism>
    <name type="scientific">Dictyostelium discoideum</name>
    <name type="common">Social amoeba</name>
    <dbReference type="NCBI Taxonomy" id="44689"/>
    <lineage>
        <taxon>Eukaryota</taxon>
        <taxon>Amoebozoa</taxon>
        <taxon>Evosea</taxon>
        <taxon>Eumycetozoa</taxon>
        <taxon>Dictyostelia</taxon>
        <taxon>Dictyosteliales</taxon>
        <taxon>Dictyosteliaceae</taxon>
        <taxon>Dictyostelium</taxon>
    </lineage>
</organism>
<accession>Q55D61</accession>
<feature type="chain" id="PRO_0000327409" description="Eukaryotic initiation factor 4A">
    <location>
        <begin position="1"/>
        <end position="405"/>
    </location>
</feature>
<feature type="domain" description="Helicase ATP-binding" evidence="2">
    <location>
        <begin position="63"/>
        <end position="233"/>
    </location>
</feature>
<feature type="domain" description="Helicase C-terminal" evidence="3">
    <location>
        <begin position="244"/>
        <end position="405"/>
    </location>
</feature>
<feature type="short sequence motif" description="Q motif">
    <location>
        <begin position="32"/>
        <end position="60"/>
    </location>
</feature>
<feature type="short sequence motif" description="DEAD box">
    <location>
        <begin position="181"/>
        <end position="184"/>
    </location>
</feature>
<feature type="binding site" evidence="2">
    <location>
        <begin position="76"/>
        <end position="83"/>
    </location>
    <ligand>
        <name>ATP</name>
        <dbReference type="ChEBI" id="CHEBI:30616"/>
    </ligand>
</feature>
<proteinExistence type="inferred from homology"/>
<name>IF4A_DICDI</name>
<gene>
    <name type="primary">tifA</name>
    <name type="ORF">DDB_G0269192</name>
</gene>
<protein>
    <recommendedName>
        <fullName>Eukaryotic initiation factor 4A</fullName>
        <shortName>eIF-4A</shortName>
        <ecNumber>3.6.4.13</ecNumber>
    </recommendedName>
    <alternativeName>
        <fullName>ATP-dependent RNA helicase eIF4A</fullName>
    </alternativeName>
    <alternativeName>
        <fullName>ATP-dependent RNA helicase tifA</fullName>
    </alternativeName>
</protein>
<comment type="function">
    <text evidence="1">ATP-dependent RNA helicase which is a subunit of the eIF4F complex involved in cap recognition and is required for mRNA binding to ribosome. In the current model of translation initiation, eIF4A unwinds RNA secondary structures in the 5'-UTR of mRNAs which is necessary to allow efficient binding of the small ribosomal subunit, and subsequent scanning for the initiator codon (By similarity).</text>
</comment>
<comment type="catalytic activity">
    <reaction>
        <text>ATP + H2O = ADP + phosphate + H(+)</text>
        <dbReference type="Rhea" id="RHEA:13065"/>
        <dbReference type="ChEBI" id="CHEBI:15377"/>
        <dbReference type="ChEBI" id="CHEBI:15378"/>
        <dbReference type="ChEBI" id="CHEBI:30616"/>
        <dbReference type="ChEBI" id="CHEBI:43474"/>
        <dbReference type="ChEBI" id="CHEBI:456216"/>
        <dbReference type="EC" id="3.6.4.13"/>
    </reaction>
</comment>
<comment type="subcellular location">
    <subcellularLocation>
        <location evidence="1">Cytoplasm</location>
    </subcellularLocation>
</comment>
<comment type="domain">
    <text>The Q motif is unique to and characteristic of the DEAD box family of RNA helicases and controls ATP binding and hydrolysis.</text>
</comment>
<comment type="similarity">
    <text evidence="4">Belongs to the DEAD box helicase family. eIF4A subfamily.</text>
</comment>
<sequence length="405" mass="45679">MSHKDRRGNSSNDGSSFKLNETFTSSEVEVKPTFESMGLREELLRGIFNYGFEKPSAIQQRAILPIIKGRDTIAQAQSGTGKTATFSIGALQCVEVNVRSPQVLILSPTRELAQQIQKVALALSEFMNIQVHACVGGKNLSDDVKKLETGVHIVSGTPGRVLDMITRKSLPTRHIKMMILDEADEMLSLGFQQQINDVYRYLPNGTQIVLVSATLTQDVVSMTEKFMTKPVRILLKRDELTLDGIKQFFVSVEKEDWKFGTLCDIYDSLTITQAVIFCNTKKKVDQLTEQMRDANFTVASMHGDMVQKEREEIIKSFRSGENRVLITTDILARGIDVQQVSLVINYDLPIDRENYIHRIGRSGRFGRKGVAINFVKNSDIRILRDIEQFYSTQIDEMPVNFASII</sequence>
<evidence type="ECO:0000250" key="1"/>
<evidence type="ECO:0000255" key="2">
    <source>
        <dbReference type="PROSITE-ProRule" id="PRU00541"/>
    </source>
</evidence>
<evidence type="ECO:0000255" key="3">
    <source>
        <dbReference type="PROSITE-ProRule" id="PRU00542"/>
    </source>
</evidence>
<evidence type="ECO:0000305" key="4"/>
<keyword id="KW-0067">ATP-binding</keyword>
<keyword id="KW-0963">Cytoplasm</keyword>
<keyword id="KW-0347">Helicase</keyword>
<keyword id="KW-0378">Hydrolase</keyword>
<keyword id="KW-0396">Initiation factor</keyword>
<keyword id="KW-0547">Nucleotide-binding</keyword>
<keyword id="KW-0648">Protein biosynthesis</keyword>
<keyword id="KW-1185">Reference proteome</keyword>
<keyword id="KW-0694">RNA-binding</keyword>
<dbReference type="EC" id="3.6.4.13"/>
<dbReference type="EMBL" id="AAFI02000005">
    <property type="protein sequence ID" value="EAL71946.1"/>
    <property type="molecule type" value="Genomic_DNA"/>
</dbReference>
<dbReference type="RefSeq" id="XP_646270.1">
    <property type="nucleotide sequence ID" value="XM_641178.1"/>
</dbReference>
<dbReference type="SMR" id="Q55D61"/>
<dbReference type="FunCoup" id="Q55D61">
    <property type="interactions" value="546"/>
</dbReference>
<dbReference type="STRING" id="44689.Q55D61"/>
<dbReference type="PaxDb" id="44689-DDB0191511"/>
<dbReference type="EnsemblProtists" id="EAL71946">
    <property type="protein sequence ID" value="EAL71946"/>
    <property type="gene ID" value="DDB_G0269192"/>
</dbReference>
<dbReference type="GeneID" id="8617226"/>
<dbReference type="KEGG" id="ddi:DDB_G0269192"/>
<dbReference type="dictyBase" id="DDB_G0269192">
    <property type="gene designation" value="tifA"/>
</dbReference>
<dbReference type="VEuPathDB" id="AmoebaDB:DDB_G0269192"/>
<dbReference type="eggNOG" id="KOG0328">
    <property type="taxonomic scope" value="Eukaryota"/>
</dbReference>
<dbReference type="HOGENOM" id="CLU_003041_1_0_1"/>
<dbReference type="InParanoid" id="Q55D61"/>
<dbReference type="OMA" id="TRFHDFK"/>
<dbReference type="PhylomeDB" id="Q55D61"/>
<dbReference type="Reactome" id="R-DDI-1169408">
    <property type="pathway name" value="ISG15 antiviral mechanism"/>
</dbReference>
<dbReference type="Reactome" id="R-DDI-72163">
    <property type="pathway name" value="mRNA Splicing - Major Pathway"/>
</dbReference>
<dbReference type="Reactome" id="R-DDI-975957">
    <property type="pathway name" value="Nonsense Mediated Decay (NMD) enhanced by the Exon Junction Complex (EJC)"/>
</dbReference>
<dbReference type="PRO" id="PR:Q55D61"/>
<dbReference type="Proteomes" id="UP000002195">
    <property type="component" value="Chromosome 1"/>
</dbReference>
<dbReference type="GO" id="GO:0071013">
    <property type="term" value="C:catalytic step 2 spliceosome"/>
    <property type="evidence" value="ECO:0000318"/>
    <property type="project" value="GO_Central"/>
</dbReference>
<dbReference type="GO" id="GO:0005737">
    <property type="term" value="C:cytoplasm"/>
    <property type="evidence" value="ECO:0007669"/>
    <property type="project" value="UniProtKB-SubCell"/>
</dbReference>
<dbReference type="GO" id="GO:0005730">
    <property type="term" value="C:nucleolus"/>
    <property type="evidence" value="ECO:0000318"/>
    <property type="project" value="GO_Central"/>
</dbReference>
<dbReference type="GO" id="GO:0005524">
    <property type="term" value="F:ATP binding"/>
    <property type="evidence" value="ECO:0007669"/>
    <property type="project" value="UniProtKB-KW"/>
</dbReference>
<dbReference type="GO" id="GO:0016887">
    <property type="term" value="F:ATP hydrolysis activity"/>
    <property type="evidence" value="ECO:0007669"/>
    <property type="project" value="RHEA"/>
</dbReference>
<dbReference type="GO" id="GO:0003729">
    <property type="term" value="F:mRNA binding"/>
    <property type="evidence" value="ECO:0000318"/>
    <property type="project" value="GO_Central"/>
</dbReference>
<dbReference type="GO" id="GO:0003724">
    <property type="term" value="F:RNA helicase activity"/>
    <property type="evidence" value="ECO:0000318"/>
    <property type="project" value="GO_Central"/>
</dbReference>
<dbReference type="GO" id="GO:0003743">
    <property type="term" value="F:translation initiation factor activity"/>
    <property type="evidence" value="ECO:0007669"/>
    <property type="project" value="UniProtKB-KW"/>
</dbReference>
<dbReference type="GO" id="GO:0000398">
    <property type="term" value="P:mRNA splicing, via spliceosome"/>
    <property type="evidence" value="ECO:0000318"/>
    <property type="project" value="GO_Central"/>
</dbReference>
<dbReference type="CDD" id="cd18045">
    <property type="entry name" value="DEADc_EIF4AIII_DDX48"/>
    <property type="match status" value="1"/>
</dbReference>
<dbReference type="CDD" id="cd18787">
    <property type="entry name" value="SF2_C_DEAD"/>
    <property type="match status" value="1"/>
</dbReference>
<dbReference type="FunFam" id="3.40.50.300:FF:000849">
    <property type="entry name" value="ATP-dependent RNA helicase DBP5"/>
    <property type="match status" value="1"/>
</dbReference>
<dbReference type="FunFam" id="3.40.50.300:FF:000031">
    <property type="entry name" value="Eukaryotic initiation factor 4A-III"/>
    <property type="match status" value="1"/>
</dbReference>
<dbReference type="Gene3D" id="3.40.50.300">
    <property type="entry name" value="P-loop containing nucleotide triphosphate hydrolases"/>
    <property type="match status" value="2"/>
</dbReference>
<dbReference type="InterPro" id="IPR011545">
    <property type="entry name" value="DEAD/DEAH_box_helicase_dom"/>
</dbReference>
<dbReference type="InterPro" id="IPR014001">
    <property type="entry name" value="Helicase_ATP-bd"/>
</dbReference>
<dbReference type="InterPro" id="IPR001650">
    <property type="entry name" value="Helicase_C-like"/>
</dbReference>
<dbReference type="InterPro" id="IPR027417">
    <property type="entry name" value="P-loop_NTPase"/>
</dbReference>
<dbReference type="InterPro" id="IPR000629">
    <property type="entry name" value="RNA-helicase_DEAD-box_CS"/>
</dbReference>
<dbReference type="InterPro" id="IPR014014">
    <property type="entry name" value="RNA_helicase_DEAD_Q_motif"/>
</dbReference>
<dbReference type="PANTHER" id="PTHR47958">
    <property type="entry name" value="ATP-DEPENDENT RNA HELICASE DBP3"/>
    <property type="match status" value="1"/>
</dbReference>
<dbReference type="Pfam" id="PF00270">
    <property type="entry name" value="DEAD"/>
    <property type="match status" value="1"/>
</dbReference>
<dbReference type="Pfam" id="PF00271">
    <property type="entry name" value="Helicase_C"/>
    <property type="match status" value="1"/>
</dbReference>
<dbReference type="SMART" id="SM00487">
    <property type="entry name" value="DEXDc"/>
    <property type="match status" value="1"/>
</dbReference>
<dbReference type="SMART" id="SM00490">
    <property type="entry name" value="HELICc"/>
    <property type="match status" value="1"/>
</dbReference>
<dbReference type="SUPFAM" id="SSF52540">
    <property type="entry name" value="P-loop containing nucleoside triphosphate hydrolases"/>
    <property type="match status" value="1"/>
</dbReference>
<dbReference type="PROSITE" id="PS00039">
    <property type="entry name" value="DEAD_ATP_HELICASE"/>
    <property type="match status" value="1"/>
</dbReference>
<dbReference type="PROSITE" id="PS51192">
    <property type="entry name" value="HELICASE_ATP_BIND_1"/>
    <property type="match status" value="1"/>
</dbReference>
<dbReference type="PROSITE" id="PS51194">
    <property type="entry name" value="HELICASE_CTER"/>
    <property type="match status" value="1"/>
</dbReference>
<dbReference type="PROSITE" id="PS51195">
    <property type="entry name" value="Q_MOTIF"/>
    <property type="match status" value="1"/>
</dbReference>